<evidence type="ECO:0000255" key="1">
    <source>
        <dbReference type="HAMAP-Rule" id="MF_01609"/>
    </source>
</evidence>
<keyword id="KW-0067">ATP-binding</keyword>
<keyword id="KW-0436">Ligase</keyword>
<keyword id="KW-0547">Nucleotide-binding</keyword>
<keyword id="KW-1185">Reference proteome</keyword>
<name>GCS21_RUBXD</name>
<sequence length="376" mass="42005">MPVEFKLGNSGYTLGVEEELCIVDASTGELVPKIEEIMSRLPEDLAEAVSYELFQSVLEIKTPVCRTVGEAERVLRELRGRVGSWTAACGASLASAGTHPFSRYRDQKVTEHERYRQVIEELRWVATREVIFGQHVHVAVPGPEEAIQAHNRLAEQAPLLLALSANSPYWQGMDTGFESSRVQIFETFPRAGMPPAFPEYAAFEAYVDLMVECGAMDDYTFCWWDVRPHPKLGTIELRVLDSQTHLRHAVALTALTQCIVASSLEDEDAPKGPYHRDIALENKWRASRRGLDAAFFDVDERRNVPARDLARAAVERLRPHAQQLGCEEELLGVLEIVEGGSGSRRQREIYEKSGDFLDVVAFLIEGTRPALAGEPS</sequence>
<reference key="1">
    <citation type="submission" date="2006-06" db="EMBL/GenBank/DDBJ databases">
        <title>Complete sequence of Rubrobacter xylanophilus DSM 9941.</title>
        <authorList>
            <consortium name="US DOE Joint Genome Institute"/>
            <person name="Copeland A."/>
            <person name="Lucas S."/>
            <person name="Lapidus A."/>
            <person name="Barry K."/>
            <person name="Detter J.C."/>
            <person name="Glavina del Rio T."/>
            <person name="Hammon N."/>
            <person name="Israni S."/>
            <person name="Dalin E."/>
            <person name="Tice H."/>
            <person name="Pitluck S."/>
            <person name="Munk A.C."/>
            <person name="Brettin T."/>
            <person name="Bruce D."/>
            <person name="Han C."/>
            <person name="Tapia R."/>
            <person name="Gilna P."/>
            <person name="Schmutz J."/>
            <person name="Larimer F."/>
            <person name="Land M."/>
            <person name="Hauser L."/>
            <person name="Kyrpides N."/>
            <person name="Lykidis A."/>
            <person name="da Costa M.S."/>
            <person name="Rainey F.A."/>
            <person name="Empadinhas N."/>
            <person name="Jolivet E."/>
            <person name="Battista J.R."/>
            <person name="Richardson P."/>
        </authorList>
    </citation>
    <scope>NUCLEOTIDE SEQUENCE [LARGE SCALE GENOMIC DNA]</scope>
    <source>
        <strain>DSM 9941 / JCM 11954 / NBRC 16129 / PRD-1</strain>
    </source>
</reference>
<dbReference type="EC" id="6.3.2.2" evidence="1"/>
<dbReference type="EMBL" id="CP000386">
    <property type="protein sequence ID" value="ABG03011.1"/>
    <property type="molecule type" value="Genomic_DNA"/>
</dbReference>
<dbReference type="SMR" id="Q1B017"/>
<dbReference type="STRING" id="266117.Rxyl_0030"/>
<dbReference type="KEGG" id="rxy:Rxyl_0030"/>
<dbReference type="eggNOG" id="COG2170">
    <property type="taxonomic scope" value="Bacteria"/>
</dbReference>
<dbReference type="HOGENOM" id="CLU_044848_1_0_11"/>
<dbReference type="OrthoDB" id="9769628at2"/>
<dbReference type="PhylomeDB" id="Q1B017"/>
<dbReference type="Proteomes" id="UP000006637">
    <property type="component" value="Chromosome"/>
</dbReference>
<dbReference type="GO" id="GO:0005524">
    <property type="term" value="F:ATP binding"/>
    <property type="evidence" value="ECO:0007669"/>
    <property type="project" value="UniProtKB-KW"/>
</dbReference>
<dbReference type="GO" id="GO:0004357">
    <property type="term" value="F:glutamate-cysteine ligase activity"/>
    <property type="evidence" value="ECO:0007669"/>
    <property type="project" value="UniProtKB-EC"/>
</dbReference>
<dbReference type="GO" id="GO:0042398">
    <property type="term" value="P:modified amino acid biosynthetic process"/>
    <property type="evidence" value="ECO:0007669"/>
    <property type="project" value="InterPro"/>
</dbReference>
<dbReference type="Gene3D" id="3.30.590.20">
    <property type="match status" value="1"/>
</dbReference>
<dbReference type="HAMAP" id="MF_01609">
    <property type="entry name" value="Glu_cys_ligase_2"/>
    <property type="match status" value="1"/>
</dbReference>
<dbReference type="InterPro" id="IPR050141">
    <property type="entry name" value="GCL_type2/YbdK_subfam"/>
</dbReference>
<dbReference type="InterPro" id="IPR006336">
    <property type="entry name" value="GCS2"/>
</dbReference>
<dbReference type="InterPro" id="IPR014746">
    <property type="entry name" value="Gln_synth/guanido_kin_cat_dom"/>
</dbReference>
<dbReference type="InterPro" id="IPR011793">
    <property type="entry name" value="YbdK"/>
</dbReference>
<dbReference type="NCBIfam" id="TIGR02050">
    <property type="entry name" value="gshA_cyan_rel"/>
    <property type="match status" value="1"/>
</dbReference>
<dbReference type="NCBIfam" id="NF010039">
    <property type="entry name" value="PRK13515.1"/>
    <property type="match status" value="1"/>
</dbReference>
<dbReference type="NCBIfam" id="NF010043">
    <property type="entry name" value="PRK13517.1-3"/>
    <property type="match status" value="1"/>
</dbReference>
<dbReference type="PANTHER" id="PTHR36510">
    <property type="entry name" value="GLUTAMATE--CYSTEINE LIGASE 2-RELATED"/>
    <property type="match status" value="1"/>
</dbReference>
<dbReference type="PANTHER" id="PTHR36510:SF1">
    <property type="entry name" value="GLUTAMATE--CYSTEINE LIGASE 2-RELATED"/>
    <property type="match status" value="1"/>
</dbReference>
<dbReference type="Pfam" id="PF04107">
    <property type="entry name" value="GCS2"/>
    <property type="match status" value="1"/>
</dbReference>
<dbReference type="SUPFAM" id="SSF55931">
    <property type="entry name" value="Glutamine synthetase/guanido kinase"/>
    <property type="match status" value="1"/>
</dbReference>
<protein>
    <recommendedName>
        <fullName evidence="1">Putative glutamate--cysteine ligase 2-1</fullName>
        <ecNumber evidence="1">6.3.2.2</ecNumber>
    </recommendedName>
    <alternativeName>
        <fullName evidence="1">Gamma-glutamylcysteine synthetase 2-1</fullName>
        <shortName evidence="1">GCS 2-1</shortName>
        <shortName evidence="1">Gamma-GCS 2-1</shortName>
    </alternativeName>
</protein>
<organism>
    <name type="scientific">Rubrobacter xylanophilus (strain DSM 9941 / JCM 11954 / NBRC 16129 / PRD-1)</name>
    <dbReference type="NCBI Taxonomy" id="266117"/>
    <lineage>
        <taxon>Bacteria</taxon>
        <taxon>Bacillati</taxon>
        <taxon>Actinomycetota</taxon>
        <taxon>Rubrobacteria</taxon>
        <taxon>Rubrobacterales</taxon>
        <taxon>Rubrobacteraceae</taxon>
        <taxon>Rubrobacter</taxon>
    </lineage>
</organism>
<gene>
    <name type="ordered locus">Rxyl_0030</name>
</gene>
<comment type="function">
    <text evidence="1">ATP-dependent carboxylate-amine ligase which exhibits weak glutamate--cysteine ligase activity.</text>
</comment>
<comment type="catalytic activity">
    <reaction evidence="1">
        <text>L-cysteine + L-glutamate + ATP = gamma-L-glutamyl-L-cysteine + ADP + phosphate + H(+)</text>
        <dbReference type="Rhea" id="RHEA:13285"/>
        <dbReference type="ChEBI" id="CHEBI:15378"/>
        <dbReference type="ChEBI" id="CHEBI:29985"/>
        <dbReference type="ChEBI" id="CHEBI:30616"/>
        <dbReference type="ChEBI" id="CHEBI:35235"/>
        <dbReference type="ChEBI" id="CHEBI:43474"/>
        <dbReference type="ChEBI" id="CHEBI:58173"/>
        <dbReference type="ChEBI" id="CHEBI:456216"/>
        <dbReference type="EC" id="6.3.2.2"/>
    </reaction>
</comment>
<comment type="similarity">
    <text evidence="1">Belongs to the glutamate--cysteine ligase type 2 family. YbdK subfamily.</text>
</comment>
<accession>Q1B017</accession>
<feature type="chain" id="PRO_0000255811" description="Putative glutamate--cysteine ligase 2-1">
    <location>
        <begin position="1"/>
        <end position="376"/>
    </location>
</feature>
<proteinExistence type="inferred from homology"/>